<dbReference type="EMBL" id="CP001177">
    <property type="protein sequence ID" value="ACJ81028.1"/>
    <property type="molecule type" value="Genomic_DNA"/>
</dbReference>
<dbReference type="SMR" id="B7HLH3"/>
<dbReference type="KEGG" id="bcr:BCAH187_A3887"/>
<dbReference type="HOGENOM" id="CLU_103507_2_1_9"/>
<dbReference type="Proteomes" id="UP000002214">
    <property type="component" value="Chromosome"/>
</dbReference>
<dbReference type="GO" id="GO:0022625">
    <property type="term" value="C:cytosolic large ribosomal subunit"/>
    <property type="evidence" value="ECO:0007669"/>
    <property type="project" value="TreeGrafter"/>
</dbReference>
<dbReference type="GO" id="GO:0003735">
    <property type="term" value="F:structural constituent of ribosome"/>
    <property type="evidence" value="ECO:0007669"/>
    <property type="project" value="InterPro"/>
</dbReference>
<dbReference type="GO" id="GO:0006412">
    <property type="term" value="P:translation"/>
    <property type="evidence" value="ECO:0007669"/>
    <property type="project" value="UniProtKB-UniRule"/>
</dbReference>
<dbReference type="FunFam" id="2.30.30.790:FF:000001">
    <property type="entry name" value="50S ribosomal protein L19"/>
    <property type="match status" value="1"/>
</dbReference>
<dbReference type="Gene3D" id="2.30.30.790">
    <property type="match status" value="1"/>
</dbReference>
<dbReference type="HAMAP" id="MF_00402">
    <property type="entry name" value="Ribosomal_bL19"/>
    <property type="match status" value="1"/>
</dbReference>
<dbReference type="InterPro" id="IPR001857">
    <property type="entry name" value="Ribosomal_bL19"/>
</dbReference>
<dbReference type="InterPro" id="IPR018257">
    <property type="entry name" value="Ribosomal_bL19_CS"/>
</dbReference>
<dbReference type="InterPro" id="IPR038657">
    <property type="entry name" value="Ribosomal_bL19_sf"/>
</dbReference>
<dbReference type="InterPro" id="IPR008991">
    <property type="entry name" value="Translation_prot_SH3-like_sf"/>
</dbReference>
<dbReference type="NCBIfam" id="TIGR01024">
    <property type="entry name" value="rplS_bact"/>
    <property type="match status" value="1"/>
</dbReference>
<dbReference type="PANTHER" id="PTHR15680:SF9">
    <property type="entry name" value="LARGE RIBOSOMAL SUBUNIT PROTEIN BL19M"/>
    <property type="match status" value="1"/>
</dbReference>
<dbReference type="PANTHER" id="PTHR15680">
    <property type="entry name" value="RIBOSOMAL PROTEIN L19"/>
    <property type="match status" value="1"/>
</dbReference>
<dbReference type="Pfam" id="PF01245">
    <property type="entry name" value="Ribosomal_L19"/>
    <property type="match status" value="1"/>
</dbReference>
<dbReference type="PIRSF" id="PIRSF002191">
    <property type="entry name" value="Ribosomal_L19"/>
    <property type="match status" value="1"/>
</dbReference>
<dbReference type="PRINTS" id="PR00061">
    <property type="entry name" value="RIBOSOMALL19"/>
</dbReference>
<dbReference type="SUPFAM" id="SSF50104">
    <property type="entry name" value="Translation proteins SH3-like domain"/>
    <property type="match status" value="1"/>
</dbReference>
<dbReference type="PROSITE" id="PS01015">
    <property type="entry name" value="RIBOSOMAL_L19"/>
    <property type="match status" value="1"/>
</dbReference>
<keyword id="KW-0687">Ribonucleoprotein</keyword>
<keyword id="KW-0689">Ribosomal protein</keyword>
<proteinExistence type="inferred from homology"/>
<name>RL19_BACC7</name>
<accession>B7HLH3</accession>
<sequence>MQQLIAEITKGQLKTDLPSFRPGDTLRVHVKVVEGTRERIQLFEGVVIKRRGGGISETFTVRKISYGVGVERTFPVHTPRIAKIEVLRRGKVRRAKLYYLRNLRGKKARIKEIR</sequence>
<protein>
    <recommendedName>
        <fullName evidence="1">Large ribosomal subunit protein bL19</fullName>
    </recommendedName>
    <alternativeName>
        <fullName evidence="2">50S ribosomal protein L19</fullName>
    </alternativeName>
</protein>
<comment type="function">
    <text evidence="1">This protein is located at the 30S-50S ribosomal subunit interface and may play a role in the structure and function of the aminoacyl-tRNA binding site.</text>
</comment>
<comment type="similarity">
    <text evidence="1">Belongs to the bacterial ribosomal protein bL19 family.</text>
</comment>
<reference key="1">
    <citation type="submission" date="2008-10" db="EMBL/GenBank/DDBJ databases">
        <title>Genome sequence of Bacillus cereus AH187.</title>
        <authorList>
            <person name="Dodson R.J."/>
            <person name="Durkin A.S."/>
            <person name="Rosovitz M.J."/>
            <person name="Rasko D.A."/>
            <person name="Kolsto A.B."/>
            <person name="Okstad O.A."/>
            <person name="Ravel J."/>
            <person name="Sutton G."/>
        </authorList>
    </citation>
    <scope>NUCLEOTIDE SEQUENCE [LARGE SCALE GENOMIC DNA]</scope>
    <source>
        <strain>AH187</strain>
    </source>
</reference>
<gene>
    <name evidence="1" type="primary">rplS</name>
    <name type="ordered locus">BCAH187_A3887</name>
</gene>
<evidence type="ECO:0000255" key="1">
    <source>
        <dbReference type="HAMAP-Rule" id="MF_00402"/>
    </source>
</evidence>
<evidence type="ECO:0000305" key="2"/>
<feature type="chain" id="PRO_1000193789" description="Large ribosomal subunit protein bL19">
    <location>
        <begin position="1"/>
        <end position="114"/>
    </location>
</feature>
<organism>
    <name type="scientific">Bacillus cereus (strain AH187)</name>
    <dbReference type="NCBI Taxonomy" id="405534"/>
    <lineage>
        <taxon>Bacteria</taxon>
        <taxon>Bacillati</taxon>
        <taxon>Bacillota</taxon>
        <taxon>Bacilli</taxon>
        <taxon>Bacillales</taxon>
        <taxon>Bacillaceae</taxon>
        <taxon>Bacillus</taxon>
        <taxon>Bacillus cereus group</taxon>
    </lineage>
</organism>